<name>X_HBVB4</name>
<organism>
    <name type="scientific">Hepatitis B virus genotype B/C subtype adw (isolate Okinawa/pODW282/1998)</name>
    <name type="common">HBV-B</name>
    <dbReference type="NCBI Taxonomy" id="10415"/>
    <lineage>
        <taxon>Viruses</taxon>
        <taxon>Riboviria</taxon>
        <taxon>Pararnavirae</taxon>
        <taxon>Artverviricota</taxon>
        <taxon>Revtraviricetes</taxon>
        <taxon>Blubervirales</taxon>
        <taxon>Hepadnaviridae</taxon>
        <taxon>Orthohepadnavirus</taxon>
        <taxon>Hepatitis B virus</taxon>
    </lineage>
</organism>
<gene>
    <name evidence="1" type="primary">X</name>
</gene>
<dbReference type="EMBL" id="D00330">
    <property type="status" value="NOT_ANNOTATED_CDS"/>
    <property type="molecule type" value="Genomic_DNA"/>
</dbReference>
<dbReference type="PIR" id="JS0603">
    <property type="entry name" value="JS0603"/>
</dbReference>
<dbReference type="SMR" id="P20977"/>
<dbReference type="Proteomes" id="UP000007916">
    <property type="component" value="Genome"/>
</dbReference>
<dbReference type="GO" id="GO:0033650">
    <property type="term" value="C:host cell mitochondrion"/>
    <property type="evidence" value="ECO:0007669"/>
    <property type="project" value="UniProtKB-SubCell"/>
</dbReference>
<dbReference type="GO" id="GO:0042025">
    <property type="term" value="C:host cell nucleus"/>
    <property type="evidence" value="ECO:0007669"/>
    <property type="project" value="UniProtKB-SubCell"/>
</dbReference>
<dbReference type="GO" id="GO:0006351">
    <property type="term" value="P:DNA-templated transcription"/>
    <property type="evidence" value="ECO:0007669"/>
    <property type="project" value="UniProtKB-UniRule"/>
</dbReference>
<dbReference type="GO" id="GO:0085033">
    <property type="term" value="P:symbiont-mediated activation of host NF-kappaB cascade"/>
    <property type="evidence" value="ECO:0007669"/>
    <property type="project" value="UniProtKB-UniRule"/>
</dbReference>
<dbReference type="GO" id="GO:0039592">
    <property type="term" value="P:symbiont-mediated arrest of host cell cycle during G2/M transition"/>
    <property type="evidence" value="ECO:0007669"/>
    <property type="project" value="UniProtKB-UniRule"/>
</dbReference>
<dbReference type="GO" id="GO:0019079">
    <property type="term" value="P:viral genome replication"/>
    <property type="evidence" value="ECO:0007669"/>
    <property type="project" value="UniProtKB-UniRule"/>
</dbReference>
<dbReference type="HAMAP" id="MF_04074">
    <property type="entry name" value="HBV_X"/>
    <property type="match status" value="1"/>
</dbReference>
<dbReference type="InterPro" id="IPR000236">
    <property type="entry name" value="Transactivation_prot_X"/>
</dbReference>
<dbReference type="Pfam" id="PF00739">
    <property type="entry name" value="X"/>
    <property type="match status" value="1"/>
</dbReference>
<keyword id="KW-1074">Activation of host NF-kappa-B by virus</keyword>
<keyword id="KW-0010">Activator</keyword>
<keyword id="KW-0053">Apoptosis</keyword>
<keyword id="KW-1035">Host cytoplasm</keyword>
<keyword id="KW-1079">Host G2/M cell cycle arrest by virus</keyword>
<keyword id="KW-1045">Host mitochondrion</keyword>
<keyword id="KW-1048">Host nucleus</keyword>
<keyword id="KW-0945">Host-virus interaction</keyword>
<keyword id="KW-1121">Modulation of host cell cycle by virus</keyword>
<keyword id="KW-0804">Transcription</keyword>
<keyword id="KW-0805">Transcription regulation</keyword>
<sequence>MAARLCCQLDPARDVLCLRPVGAESRGRPFPGPLGALPPASPPVVPTDHGAHLSLRGLPVCAFSSAGPCALRFTSARRMETTVNAHGNLPKVLHKRTLGLSAMSTTDLEAYFKDCVFNEWEELGEEVRLKVFVLGGCRHKLVCSPAPCNFFTSA</sequence>
<reference key="1">
    <citation type="journal article" date="1988" name="J. Gen. Virol.">
        <title>Typing hepatitis B virus by homology in nucleotide sequence: comparison of surface antigen subtypes.</title>
        <authorList>
            <person name="Okamoto H."/>
            <person name="Tsuda F."/>
            <person name="Sakugawa H."/>
            <person name="Sastrosoewignjo R.I."/>
            <person name="Imai M."/>
            <person name="Miyakawa Y."/>
            <person name="Mayumi M."/>
        </authorList>
    </citation>
    <scope>NUCLEOTIDE SEQUENCE [GENOMIC DNA]</scope>
</reference>
<reference key="2">
    <citation type="journal article" date="2004" name="J. Virol.">
        <title>The enigmatic X gene of hepatitis B virus.</title>
        <authorList>
            <person name="Bouchard M.J."/>
            <person name="Schneider R.J."/>
        </authorList>
    </citation>
    <scope>REVIEW</scope>
</reference>
<reference key="3">
    <citation type="journal article" date="2006" name="Cancer Sci.">
        <title>Molecular functions and biological roles of hepatitis B virus x protein.</title>
        <authorList>
            <person name="Tang H."/>
            <person name="Oishi N."/>
            <person name="Kaneko S."/>
            <person name="Murakami S."/>
        </authorList>
    </citation>
    <scope>REVIEW</scope>
</reference>
<comment type="function">
    <text evidence="1">Multifunctional protein that plays a role in silencing host antiviral defenses and promoting viral transcription. Does not seem to be essential for HBV infection. May be directly involved in development of cirrhosis and liver cancer (hepatocellular carcinoma). Most of cytosolic activities involve modulation of cytosolic calcium. The effect on apoptosis is controversial depending on the cell types in which the studies have been conducted. May induce apoptosis by localizing in mitochondria and causing loss of mitochondrial membrane potential. May also modulate apoptosis by binding host CFLAR, a key regulator of the death-inducing signaling complex (DISC). Promotes viral transcription by using the host E3 ubiquitin ligase DDB1 to target the SMC5-SMC6 complex to proteasomal degradation. This host complex would otherwise bind to viral episomal DNA, and prevents its transcription. Moderately stimulates transcription of many different viral and cellular transcription elements. Promoters and enhancers stimulated by HBx contain DNA binding sites for NF-kappa-B, AP-1, AP-2, c-EBP, ATF/CREB, or the calcium-activated factor NF-AT.</text>
</comment>
<comment type="subunit">
    <text evidence="1">May form homodimer. May interact with host CEBPA, CFLAR, CREB1, DDB1, E4F1, HBXIP, HSPD1/HSP60, NFKBIA, POLR2E and SMAD4. Interacts with host SMC5-SMC6 complex and induces its degradation. Interacts with host TRPC4AP; leading to prevent ubiquitination of TRPC4AP. Interacts with host PLSCR1; this interaction promotes ubiquitination and degradation of HBx and impairs HBx-mediated cell proliferation.</text>
</comment>
<comment type="subcellular location">
    <subcellularLocation>
        <location evidence="1">Host cytoplasm</location>
    </subcellularLocation>
    <subcellularLocation>
        <location evidence="1">Host nucleus</location>
    </subcellularLocation>
    <subcellularLocation>
        <location evidence="1">Host mitochondrion</location>
    </subcellularLocation>
    <text evidence="1">Mainly cytoplasmic as only a fraction is detected in the nucleus. In cytoplasm, a minor fraction associates with mitochondria or proteasomes.</text>
</comment>
<comment type="PTM">
    <text evidence="1">A fraction may be phosphorylated in insect cells and HepG2 cells, a human hepatoblastoma cell line. Phosphorylated in vitro by host protein kinase C or mitogen-activated protein kinase. N-acetylated in insect cells.</text>
</comment>
<comment type="similarity">
    <text evidence="1">Belongs to the orthohepadnavirus protein X family.</text>
</comment>
<comment type="caution">
    <text>Transcriptional activities should be taken with a grain of salt. As of 2007, all studies demonstrating in vivo interaction between protein X and transcriptional components were performed with significant overexpression of both proteins and in the absence of viral infection.</text>
</comment>
<proteinExistence type="inferred from homology"/>
<protein>
    <recommendedName>
        <fullName evidence="1">Protein X</fullName>
    </recommendedName>
    <alternativeName>
        <fullName evidence="1">HBx</fullName>
    </alternativeName>
    <alternativeName>
        <fullName evidence="1">Peptide X</fullName>
    </alternativeName>
    <alternativeName>
        <fullName evidence="1">pX</fullName>
    </alternativeName>
</protein>
<feature type="chain" id="PRO_0000222368" description="Protein X">
    <location>
        <begin position="1"/>
        <end position="154"/>
    </location>
</feature>
<feature type="region of interest" description="Mitochondrial targeting sequence" evidence="1">
    <location>
        <begin position="68"/>
        <end position="117"/>
    </location>
</feature>
<accession>P20977</accession>
<organismHost>
    <name type="scientific">Homo sapiens</name>
    <name type="common">Human</name>
    <dbReference type="NCBI Taxonomy" id="9606"/>
</organismHost>
<organismHost>
    <name type="scientific">Pan troglodytes</name>
    <name type="common">Chimpanzee</name>
    <dbReference type="NCBI Taxonomy" id="9598"/>
</organismHost>
<evidence type="ECO:0000255" key="1">
    <source>
        <dbReference type="HAMAP-Rule" id="MF_04074"/>
    </source>
</evidence>